<evidence type="ECO:0000250" key="1"/>
<evidence type="ECO:0000255" key="2"/>
<evidence type="ECO:0000255" key="3">
    <source>
        <dbReference type="PROSITE-ProRule" id="PRU00047"/>
    </source>
</evidence>
<evidence type="ECO:0000256" key="4">
    <source>
        <dbReference type="SAM" id="MobiDB-lite"/>
    </source>
</evidence>
<evidence type="ECO:0000305" key="5"/>
<organism>
    <name type="scientific">Homo sapiens</name>
    <name type="common">Human</name>
    <dbReference type="NCBI Taxonomy" id="9606"/>
    <lineage>
        <taxon>Eukaryota</taxon>
        <taxon>Metazoa</taxon>
        <taxon>Chordata</taxon>
        <taxon>Craniata</taxon>
        <taxon>Vertebrata</taxon>
        <taxon>Euteleostomi</taxon>
        <taxon>Mammalia</taxon>
        <taxon>Eutheria</taxon>
        <taxon>Euarchontoglires</taxon>
        <taxon>Primates</taxon>
        <taxon>Haplorrhini</taxon>
        <taxon>Catarrhini</taxon>
        <taxon>Hominidae</taxon>
        <taxon>Homo</taxon>
    </lineage>
</organism>
<feature type="initiator methionine" description="Removed" evidence="2">
    <location>
        <position position="1"/>
    </location>
</feature>
<feature type="chain" id="PRO_0000186755" description="Endogenous retrovirus group K member 7 Gag polyprotein">
    <location>
        <begin position="2"/>
        <end position="666"/>
    </location>
</feature>
<feature type="zinc finger region" description="CCHC-type 1" evidence="3">
    <location>
        <begin position="544"/>
        <end position="561"/>
    </location>
</feature>
<feature type="zinc finger region" description="CCHC-type 2" evidence="3">
    <location>
        <begin position="580"/>
        <end position="597"/>
    </location>
</feature>
<feature type="region of interest" description="Disordered" evidence="4">
    <location>
        <begin position="165"/>
        <end position="205"/>
    </location>
</feature>
<feature type="region of interest" description="Disordered" evidence="4">
    <location>
        <begin position="217"/>
        <end position="264"/>
    </location>
</feature>
<feature type="region of interest" description="Disordered" evidence="4">
    <location>
        <begin position="598"/>
        <end position="641"/>
    </location>
</feature>
<feature type="compositionally biased region" description="Pro residues" evidence="4">
    <location>
        <begin position="232"/>
        <end position="247"/>
    </location>
</feature>
<feature type="compositionally biased region" description="Polar residues" evidence="4">
    <location>
        <begin position="604"/>
        <end position="622"/>
    </location>
</feature>
<feature type="lipid moiety-binding region" description="N-myristoyl glycine" evidence="2">
    <location>
        <position position="2"/>
    </location>
</feature>
<feature type="sequence conflict" description="In Ref. 1; AAD51792." evidence="5" ref="1">
    <original>K</original>
    <variation>E</variation>
    <location>
        <position position="99"/>
    </location>
</feature>
<protein>
    <recommendedName>
        <fullName>Endogenous retrovirus group K member 7 Gag polyprotein</fullName>
    </recommendedName>
    <alternativeName>
        <fullName>HERV-K(III) Gag protein</fullName>
    </alternativeName>
    <alternativeName>
        <fullName>HERV-K102 Gag protein</fullName>
    </alternativeName>
    <alternativeName>
        <fullName>HERV-K_1q22 provirus ancestral Gag polyprotein</fullName>
        <shortName>Gag polyprotein</shortName>
    </alternativeName>
</protein>
<gene>
    <name type="primary">ERVK-7</name>
</gene>
<keyword id="KW-1003">Cell membrane</keyword>
<keyword id="KW-0895">ERV</keyword>
<keyword id="KW-0449">Lipoprotein</keyword>
<keyword id="KW-0472">Membrane</keyword>
<keyword id="KW-0479">Metal-binding</keyword>
<keyword id="KW-0519">Myristate</keyword>
<keyword id="KW-1185">Reference proteome</keyword>
<keyword id="KW-0677">Repeat</keyword>
<keyword id="KW-0814">Transposable element</keyword>
<keyword id="KW-0862">Zinc</keyword>
<keyword id="KW-0863">Zinc-finger</keyword>
<comment type="function">
    <text>The products of the Gag polyproteins of infectious retroviruses perform highly complex orchestrated tasks during the assembly, budding, maturation, and infection stages of the viral replication cycle. During viral assembly, the proteins form membrane associations and self-associations that ultimately result in budding of an immature virion from the infected cell. Gag precursors also function during viral assembly to selectively bind and package two plus strands of genomic RNA. Endogenous Gag proteins may have kept, lost or modified their original function during evolution.</text>
</comment>
<comment type="subcellular location">
    <subcellularLocation>
        <location>Cell membrane</location>
        <topology>Lipid-anchor</topology>
    </subcellularLocation>
    <text evidence="1">Cytoplasmic membrane (in a transfection system).</text>
</comment>
<comment type="domain">
    <text>HERV-K Gag polyprotein contains regions homologous to the matrix (MA), capsid (CA) and nucleocapsid (NC) proteins from infectious retroviruses. Evidence suggests that HERV-K(HML-2) Gag polyprotein can be cleaved into mature MA, CA and NC under certain circumstances. However, the exact boundaries as well as the size of processed Gag proteins have not been precisely determined yet.</text>
</comment>
<comment type="PTM">
    <text evidence="5">Specific enzymatic cleavages may yield mature proteins.</text>
</comment>
<comment type="PTM">
    <text evidence="1">Myristoylation is essential for retroviral assembly. Alteration of the glycine residue leads to a block in the budding of particles and an accumulation of Gag inside the cell (By similarity).</text>
</comment>
<comment type="miscellaneous">
    <text>This protein is synthesized as a Gag polypeptide and as a Gag-Pro-Pol polyprotein. The later is the precursor of the Pro and Pol proteins. It is thought, by similarity with type-B retroviruses, to be generated by -1 frameshifts occurring at the Gag-Pro and Pro-Pol genes boundaries.</text>
</comment>
<comment type="miscellaneous">
    <text>This Gag protein is encoded by a human specific provirus.</text>
</comment>
<comment type="similarity">
    <text evidence="5">Belongs to the beta type-B retroviral Gag protein family. HERV class-II K(HML-2) gag subfamily.</text>
</comment>
<comment type="sequence caution" evidence="5">
    <conflict type="frameshift">
        <sequence resource="EMBL-CDS" id="AAD51792"/>
    </conflict>
</comment>
<comment type="sequence caution" evidence="5">
    <conflict type="erroneous termination">
        <sequence resource="EMBL" id="AL353807"/>
    </conflict>
    <text>Truncated C-terminus.</text>
</comment>
<dbReference type="EMBL" id="AF164610">
    <property type="protein sequence ID" value="AAD51792.1"/>
    <property type="status" value="ALT_FRAME"/>
    <property type="molecule type" value="Genomic_DNA"/>
</dbReference>
<dbReference type="EMBL" id="AL353807">
    <property type="status" value="NOT_ANNOTATED_CDS"/>
    <property type="molecule type" value="Genomic_DNA"/>
</dbReference>
<dbReference type="SMR" id="P63130"/>
<dbReference type="BioMuta" id="HGNC:31828"/>
<dbReference type="jPOST" id="P63130"/>
<dbReference type="MassIVE" id="P63130"/>
<dbReference type="PeptideAtlas" id="P63130"/>
<dbReference type="AGR" id="HGNC:31828"/>
<dbReference type="GeneCards" id="ERVK-7"/>
<dbReference type="HGNC" id="HGNC:31828">
    <property type="gene designation" value="ERVK-7"/>
</dbReference>
<dbReference type="MIM" id="614013">
    <property type="type" value="gene"/>
</dbReference>
<dbReference type="neXtProt" id="NX_P63130"/>
<dbReference type="PhylomeDB" id="P63130"/>
<dbReference type="Pharos" id="P63130">
    <property type="development level" value="Tdark"/>
</dbReference>
<dbReference type="Proteomes" id="UP000005640">
    <property type="component" value="Unplaced"/>
</dbReference>
<dbReference type="GO" id="GO:0005886">
    <property type="term" value="C:plasma membrane"/>
    <property type="evidence" value="ECO:0007669"/>
    <property type="project" value="UniProtKB-SubCell"/>
</dbReference>
<dbReference type="GO" id="GO:0003676">
    <property type="term" value="F:nucleic acid binding"/>
    <property type="evidence" value="ECO:0007669"/>
    <property type="project" value="InterPro"/>
</dbReference>
<dbReference type="GO" id="GO:0005198">
    <property type="term" value="F:structural molecule activity"/>
    <property type="evidence" value="ECO:0007669"/>
    <property type="project" value="InterPro"/>
</dbReference>
<dbReference type="GO" id="GO:0008270">
    <property type="term" value="F:zinc ion binding"/>
    <property type="evidence" value="ECO:0007669"/>
    <property type="project" value="UniProtKB-KW"/>
</dbReference>
<dbReference type="GO" id="GO:0016032">
    <property type="term" value="P:viral process"/>
    <property type="evidence" value="ECO:0007669"/>
    <property type="project" value="InterPro"/>
</dbReference>
<dbReference type="Gene3D" id="1.10.1200.30">
    <property type="match status" value="1"/>
</dbReference>
<dbReference type="Gene3D" id="1.10.375.10">
    <property type="entry name" value="Human Immunodeficiency Virus Type 1 Capsid Protein"/>
    <property type="match status" value="1"/>
</dbReference>
<dbReference type="Gene3D" id="1.10.150.490">
    <property type="entry name" value="Retroviral GAG p10 protein"/>
    <property type="match status" value="1"/>
</dbReference>
<dbReference type="Gene3D" id="4.10.60.10">
    <property type="entry name" value="Zinc finger, CCHC-type"/>
    <property type="match status" value="1"/>
</dbReference>
<dbReference type="InterPro" id="IPR003322">
    <property type="entry name" value="B_retro_matrix"/>
</dbReference>
<dbReference type="InterPro" id="IPR038124">
    <property type="entry name" value="B_retro_matrix_sf"/>
</dbReference>
<dbReference type="InterPro" id="IPR045345">
    <property type="entry name" value="Gag_p24_C"/>
</dbReference>
<dbReference type="InterPro" id="IPR050195">
    <property type="entry name" value="Primate_lentivir_Gag_pol-like"/>
</dbReference>
<dbReference type="InterPro" id="IPR008916">
    <property type="entry name" value="Retrov_capsid_C"/>
</dbReference>
<dbReference type="InterPro" id="IPR008919">
    <property type="entry name" value="Retrov_capsid_N"/>
</dbReference>
<dbReference type="InterPro" id="IPR010999">
    <property type="entry name" value="Retrovr_matrix"/>
</dbReference>
<dbReference type="InterPro" id="IPR001878">
    <property type="entry name" value="Znf_CCHC"/>
</dbReference>
<dbReference type="InterPro" id="IPR036875">
    <property type="entry name" value="Znf_CCHC_sf"/>
</dbReference>
<dbReference type="PANTHER" id="PTHR40389">
    <property type="entry name" value="ENDOGENOUS RETROVIRUS GROUP K MEMBER 24 GAG POLYPROTEIN-RELATED"/>
    <property type="match status" value="1"/>
</dbReference>
<dbReference type="PANTHER" id="PTHR40389:SF2">
    <property type="entry name" value="ENDOGENOUS RETROVIRUS GROUP K MEMBER 24 GAG POLYPROTEIN-RELATED"/>
    <property type="match status" value="1"/>
</dbReference>
<dbReference type="Pfam" id="PF02337">
    <property type="entry name" value="Gag_p10"/>
    <property type="match status" value="1"/>
</dbReference>
<dbReference type="Pfam" id="PF00607">
    <property type="entry name" value="Gag_p24"/>
    <property type="match status" value="1"/>
</dbReference>
<dbReference type="Pfam" id="PF19317">
    <property type="entry name" value="Gag_p24_C"/>
    <property type="match status" value="1"/>
</dbReference>
<dbReference type="Pfam" id="PF00098">
    <property type="entry name" value="zf-CCHC"/>
    <property type="match status" value="1"/>
</dbReference>
<dbReference type="Pfam" id="PF14787">
    <property type="entry name" value="zf-CCHC_5"/>
    <property type="match status" value="1"/>
</dbReference>
<dbReference type="SMART" id="SM00343">
    <property type="entry name" value="ZnF_C2HC"/>
    <property type="match status" value="2"/>
</dbReference>
<dbReference type="SUPFAM" id="SSF47836">
    <property type="entry name" value="Retroviral matrix proteins"/>
    <property type="match status" value="1"/>
</dbReference>
<dbReference type="SUPFAM" id="SSF47353">
    <property type="entry name" value="Retrovirus capsid dimerization domain-like"/>
    <property type="match status" value="1"/>
</dbReference>
<dbReference type="SUPFAM" id="SSF47943">
    <property type="entry name" value="Retrovirus capsid protein, N-terminal core domain"/>
    <property type="match status" value="1"/>
</dbReference>
<dbReference type="SUPFAM" id="SSF57756">
    <property type="entry name" value="Retrovirus zinc finger-like domains"/>
    <property type="match status" value="2"/>
</dbReference>
<dbReference type="PROSITE" id="PS50158">
    <property type="entry name" value="ZF_CCHC"/>
    <property type="match status" value="1"/>
</dbReference>
<sequence length="666" mass="74111">MGQTKSKIKSKYASYLSFIKILLKRGGVKVSTKNLIKLFQIIEQFCPWFPEQGTLDLKDWKRIGKELKQAGRKGNIIPLTVWNDWAIIKAALEPFQTEKDSVSVSDALGSCIIDCNENTRKKSQKETEGLHCEYVAEPVMAQSTQNVDYNQLQEVIYPETLKLEGKGPELVGPSESKPRGTSHLPAGQVPVTLQPQKQVKENKTQPPVAYQYWPPAELQYRPPPESQYGYPGMPPAPQGRAPYPQPPTRRLNPTAPPSRQGSELHEIIDKSRKEGDTEAWQFPVTLEPMPPGEGAQEGEPPTVEARYKSFSIKMLKDMKEGVKQYGPNSPYMRTLLDSIAHGHRLIPYDWEILAKSSLSPSQFLQFKTWWIDGVQEQVRRNRAANPPVNIDADQLLGIGQNWSTISQQALMQNEAIEQVRAICLRAWEKIQDPGSTCPSFNTVRQGSKEPYPDFVARLQDVAQKSIADEKARKVIVELMAYENANPECQSAIKPLKGKVPAGSDVISEYVKACDGIGGAMHKAMLMAQAITGVVLGGQVRTFGGKCYNCGQIGHLKKNCPVLNKQNITIQATTTGREPPDLCPRCKKGKHWASQCRSKFDKNGQPLSGNEQRGQPQAPQQTGAFPIQPFVPQGFQEQQPPLSQVFQGISQLPQYNNCPPPQAAVQQ</sequence>
<name>GAK7_HUMAN</name>
<accession>P63130</accession>
<accession>Q9UKI0</accession>
<reference key="1">
    <citation type="journal article" date="1999" name="Curr. Biol.">
        <title>Many human endogenous retrovirus K (HERV-K) proviruses are unique to humans.</title>
        <authorList>
            <person name="Barbulescu M."/>
            <person name="Turner G."/>
            <person name="Seaman M.I."/>
            <person name="Deinard A.S."/>
            <person name="Kidd K.K."/>
            <person name="Lenz J."/>
        </authorList>
    </citation>
    <scope>NUCLEOTIDE SEQUENCE [GENOMIC DNA]</scope>
</reference>
<reference key="2">
    <citation type="journal article" date="2006" name="Nature">
        <title>The DNA sequence and biological annotation of human chromosome 1.</title>
        <authorList>
            <person name="Gregory S.G."/>
            <person name="Barlow K.F."/>
            <person name="McLay K.E."/>
            <person name="Kaul R."/>
            <person name="Swarbreck D."/>
            <person name="Dunham A."/>
            <person name="Scott C.E."/>
            <person name="Howe K.L."/>
            <person name="Woodfine K."/>
            <person name="Spencer C.C.A."/>
            <person name="Jones M.C."/>
            <person name="Gillson C."/>
            <person name="Searle S."/>
            <person name="Zhou Y."/>
            <person name="Kokocinski F."/>
            <person name="McDonald L."/>
            <person name="Evans R."/>
            <person name="Phillips K."/>
            <person name="Atkinson A."/>
            <person name="Cooper R."/>
            <person name="Jones C."/>
            <person name="Hall R.E."/>
            <person name="Andrews T.D."/>
            <person name="Lloyd C."/>
            <person name="Ainscough R."/>
            <person name="Almeida J.P."/>
            <person name="Ambrose K.D."/>
            <person name="Anderson F."/>
            <person name="Andrew R.W."/>
            <person name="Ashwell R.I.S."/>
            <person name="Aubin K."/>
            <person name="Babbage A.K."/>
            <person name="Bagguley C.L."/>
            <person name="Bailey J."/>
            <person name="Beasley H."/>
            <person name="Bethel G."/>
            <person name="Bird C.P."/>
            <person name="Bray-Allen S."/>
            <person name="Brown J.Y."/>
            <person name="Brown A.J."/>
            <person name="Buckley D."/>
            <person name="Burton J."/>
            <person name="Bye J."/>
            <person name="Carder C."/>
            <person name="Chapman J.C."/>
            <person name="Clark S.Y."/>
            <person name="Clarke G."/>
            <person name="Clee C."/>
            <person name="Cobley V."/>
            <person name="Collier R.E."/>
            <person name="Corby N."/>
            <person name="Coville G.J."/>
            <person name="Davies J."/>
            <person name="Deadman R."/>
            <person name="Dunn M."/>
            <person name="Earthrowl M."/>
            <person name="Ellington A.G."/>
            <person name="Errington H."/>
            <person name="Frankish A."/>
            <person name="Frankland J."/>
            <person name="French L."/>
            <person name="Garner P."/>
            <person name="Garnett J."/>
            <person name="Gay L."/>
            <person name="Ghori M.R.J."/>
            <person name="Gibson R."/>
            <person name="Gilby L.M."/>
            <person name="Gillett W."/>
            <person name="Glithero R.J."/>
            <person name="Grafham D.V."/>
            <person name="Griffiths C."/>
            <person name="Griffiths-Jones S."/>
            <person name="Grocock R."/>
            <person name="Hammond S."/>
            <person name="Harrison E.S.I."/>
            <person name="Hart E."/>
            <person name="Haugen E."/>
            <person name="Heath P.D."/>
            <person name="Holmes S."/>
            <person name="Holt K."/>
            <person name="Howden P.J."/>
            <person name="Hunt A.R."/>
            <person name="Hunt S.E."/>
            <person name="Hunter G."/>
            <person name="Isherwood J."/>
            <person name="James R."/>
            <person name="Johnson C."/>
            <person name="Johnson D."/>
            <person name="Joy A."/>
            <person name="Kay M."/>
            <person name="Kershaw J.K."/>
            <person name="Kibukawa M."/>
            <person name="Kimberley A.M."/>
            <person name="King A."/>
            <person name="Knights A.J."/>
            <person name="Lad H."/>
            <person name="Laird G."/>
            <person name="Lawlor S."/>
            <person name="Leongamornlert D.A."/>
            <person name="Lloyd D.M."/>
            <person name="Loveland J."/>
            <person name="Lovell J."/>
            <person name="Lush M.J."/>
            <person name="Lyne R."/>
            <person name="Martin S."/>
            <person name="Mashreghi-Mohammadi M."/>
            <person name="Matthews L."/>
            <person name="Matthews N.S.W."/>
            <person name="McLaren S."/>
            <person name="Milne S."/>
            <person name="Mistry S."/>
            <person name="Moore M.J.F."/>
            <person name="Nickerson T."/>
            <person name="O'Dell C.N."/>
            <person name="Oliver K."/>
            <person name="Palmeiri A."/>
            <person name="Palmer S.A."/>
            <person name="Parker A."/>
            <person name="Patel D."/>
            <person name="Pearce A.V."/>
            <person name="Peck A.I."/>
            <person name="Pelan S."/>
            <person name="Phelps K."/>
            <person name="Phillimore B.J."/>
            <person name="Plumb R."/>
            <person name="Rajan J."/>
            <person name="Raymond C."/>
            <person name="Rouse G."/>
            <person name="Saenphimmachak C."/>
            <person name="Sehra H.K."/>
            <person name="Sheridan E."/>
            <person name="Shownkeen R."/>
            <person name="Sims S."/>
            <person name="Skuce C.D."/>
            <person name="Smith M."/>
            <person name="Steward C."/>
            <person name="Subramanian S."/>
            <person name="Sycamore N."/>
            <person name="Tracey A."/>
            <person name="Tromans A."/>
            <person name="Van Helmond Z."/>
            <person name="Wall M."/>
            <person name="Wallis J.M."/>
            <person name="White S."/>
            <person name="Whitehead S.L."/>
            <person name="Wilkinson J.E."/>
            <person name="Willey D.L."/>
            <person name="Williams H."/>
            <person name="Wilming L."/>
            <person name="Wray P.W."/>
            <person name="Wu Z."/>
            <person name="Coulson A."/>
            <person name="Vaudin M."/>
            <person name="Sulston J.E."/>
            <person name="Durbin R.M."/>
            <person name="Hubbard T."/>
            <person name="Wooster R."/>
            <person name="Dunham I."/>
            <person name="Carter N.P."/>
            <person name="McVean G."/>
            <person name="Ross M.T."/>
            <person name="Harrow J."/>
            <person name="Olson M.V."/>
            <person name="Beck S."/>
            <person name="Rogers J."/>
            <person name="Bentley D.R."/>
        </authorList>
    </citation>
    <scope>NUCLEOTIDE SEQUENCE [LARGE SCALE GENOMIC DNA]</scope>
</reference>
<proteinExistence type="inferred from homology"/>